<proteinExistence type="inferred from homology"/>
<evidence type="ECO:0000250" key="1"/>
<evidence type="ECO:0000250" key="2">
    <source>
        <dbReference type="UniProtKB" id="Q9NRG4"/>
    </source>
</evidence>
<evidence type="ECO:0000255" key="3">
    <source>
        <dbReference type="PROSITE-ProRule" id="PRU00134"/>
    </source>
</evidence>
<evidence type="ECO:0000255" key="4">
    <source>
        <dbReference type="PROSITE-ProRule" id="PRU00190"/>
    </source>
</evidence>
<feature type="chain" id="PRO_0000405847" description="N-lysine methyltransferase SMYD2">
    <location>
        <begin position="1"/>
        <end position="436"/>
    </location>
</feature>
<feature type="domain" description="SET" evidence="4">
    <location>
        <begin position="10"/>
        <end position="244"/>
    </location>
</feature>
<feature type="zinc finger region" description="MYND-type" evidence="3">
    <location>
        <begin position="55"/>
        <end position="93"/>
    </location>
</feature>
<feature type="binding site" evidence="1">
    <location>
        <begin position="20"/>
        <end position="22"/>
    </location>
    <ligand>
        <name>S-adenosyl-L-methionine</name>
        <dbReference type="ChEBI" id="CHEBI:59789"/>
    </ligand>
</feature>
<feature type="binding site" evidence="3">
    <location>
        <position position="55"/>
    </location>
    <ligand>
        <name>Zn(2+)</name>
        <dbReference type="ChEBI" id="CHEBI:29105"/>
        <label>1</label>
    </ligand>
</feature>
<feature type="binding site" evidence="3">
    <location>
        <position position="58"/>
    </location>
    <ligand>
        <name>Zn(2+)</name>
        <dbReference type="ChEBI" id="CHEBI:29105"/>
        <label>1</label>
    </ligand>
</feature>
<feature type="binding site" evidence="3">
    <location>
        <position position="68"/>
    </location>
    <ligand>
        <name>Zn(2+)</name>
        <dbReference type="ChEBI" id="CHEBI:29105"/>
        <label>2</label>
    </ligand>
</feature>
<feature type="binding site" evidence="3">
    <location>
        <position position="71"/>
    </location>
    <ligand>
        <name>Zn(2+)</name>
        <dbReference type="ChEBI" id="CHEBI:29105"/>
        <label>2</label>
    </ligand>
</feature>
<feature type="binding site" evidence="3">
    <location>
        <position position="77"/>
    </location>
    <ligand>
        <name>Zn(2+)</name>
        <dbReference type="ChEBI" id="CHEBI:29105"/>
        <label>1</label>
    </ligand>
</feature>
<feature type="binding site" evidence="3">
    <location>
        <position position="81"/>
    </location>
    <ligand>
        <name>Zn(2+)</name>
        <dbReference type="ChEBI" id="CHEBI:29105"/>
        <label>1</label>
    </ligand>
</feature>
<feature type="binding site" evidence="3">
    <location>
        <position position="89"/>
    </location>
    <ligand>
        <name>Zn(2+)</name>
        <dbReference type="ChEBI" id="CHEBI:29105"/>
        <label>2</label>
    </ligand>
</feature>
<feature type="binding site" evidence="3">
    <location>
        <position position="93"/>
    </location>
    <ligand>
        <name>Zn(2+)</name>
        <dbReference type="ChEBI" id="CHEBI:29105"/>
        <label>2</label>
    </ligand>
</feature>
<feature type="binding site" evidence="4">
    <location>
        <position position="140"/>
    </location>
    <ligand>
        <name>S-adenosyl-L-methionine</name>
        <dbReference type="ChEBI" id="CHEBI:59789"/>
    </ligand>
</feature>
<feature type="binding site" evidence="1">
    <location>
        <begin position="209"/>
        <end position="210"/>
    </location>
    <ligand>
        <name>S-adenosyl-L-methionine</name>
        <dbReference type="ChEBI" id="CHEBI:59789"/>
    </ligand>
</feature>
<feature type="binding site" evidence="1">
    <location>
        <begin position="261"/>
        <end position="263"/>
    </location>
    <ligand>
        <name>S-adenosyl-L-methionine</name>
        <dbReference type="ChEBI" id="CHEBI:59789"/>
    </ligand>
</feature>
<dbReference type="EC" id="2.1.1.-" evidence="2"/>
<dbReference type="EC" id="2.1.1.354" evidence="2"/>
<dbReference type="EMBL" id="AADN02012084">
    <property type="status" value="NOT_ANNOTATED_CDS"/>
    <property type="molecule type" value="Genomic_DNA"/>
</dbReference>
<dbReference type="SMR" id="E1C5V0"/>
<dbReference type="FunCoup" id="E1C5V0">
    <property type="interactions" value="192"/>
</dbReference>
<dbReference type="STRING" id="9031.ENSGALP00000054682"/>
<dbReference type="PaxDb" id="9031-ENSGALP00000015907"/>
<dbReference type="VEuPathDB" id="HostDB:geneid_421361"/>
<dbReference type="eggNOG" id="KOG2084">
    <property type="taxonomic scope" value="Eukaryota"/>
</dbReference>
<dbReference type="InParanoid" id="E1C5V0"/>
<dbReference type="OrthoDB" id="5945798at2759"/>
<dbReference type="PhylomeDB" id="E1C5V0"/>
<dbReference type="TreeFam" id="TF106487"/>
<dbReference type="Proteomes" id="UP000000539">
    <property type="component" value="Unassembled WGS sequence"/>
</dbReference>
<dbReference type="GO" id="GO:0005737">
    <property type="term" value="C:cytoplasm"/>
    <property type="evidence" value="ECO:0000250"/>
    <property type="project" value="UniProtKB"/>
</dbReference>
<dbReference type="GO" id="GO:0005829">
    <property type="term" value="C:cytosol"/>
    <property type="evidence" value="ECO:0000250"/>
    <property type="project" value="UniProtKB"/>
</dbReference>
<dbReference type="GO" id="GO:0005634">
    <property type="term" value="C:nucleus"/>
    <property type="evidence" value="ECO:0000250"/>
    <property type="project" value="UniProtKB"/>
</dbReference>
<dbReference type="GO" id="GO:0046975">
    <property type="term" value="F:histone H3K36 methyltransferase activity"/>
    <property type="evidence" value="ECO:0000250"/>
    <property type="project" value="UniProtKB"/>
</dbReference>
<dbReference type="GO" id="GO:0140999">
    <property type="term" value="F:histone H3K4 trimethyltransferase activity"/>
    <property type="evidence" value="ECO:0007669"/>
    <property type="project" value="UniProtKB-EC"/>
</dbReference>
<dbReference type="GO" id="GO:0016279">
    <property type="term" value="F:protein-lysine N-methyltransferase activity"/>
    <property type="evidence" value="ECO:0000250"/>
    <property type="project" value="UniProtKB"/>
</dbReference>
<dbReference type="GO" id="GO:0000993">
    <property type="term" value="F:RNA polymerase II complex binding"/>
    <property type="evidence" value="ECO:0000250"/>
    <property type="project" value="UniProtKB"/>
</dbReference>
<dbReference type="GO" id="GO:0008270">
    <property type="term" value="F:zinc ion binding"/>
    <property type="evidence" value="ECO:0007669"/>
    <property type="project" value="UniProtKB-KW"/>
</dbReference>
<dbReference type="GO" id="GO:0008285">
    <property type="term" value="P:negative regulation of cell population proliferation"/>
    <property type="evidence" value="ECO:0000250"/>
    <property type="project" value="UniProtKB"/>
</dbReference>
<dbReference type="GO" id="GO:0000122">
    <property type="term" value="P:negative regulation of transcription by RNA polymerase II"/>
    <property type="evidence" value="ECO:0000250"/>
    <property type="project" value="UniProtKB"/>
</dbReference>
<dbReference type="GO" id="GO:0018027">
    <property type="term" value="P:peptidyl-lysine dimethylation"/>
    <property type="evidence" value="ECO:0000250"/>
    <property type="project" value="UniProtKB"/>
</dbReference>
<dbReference type="GO" id="GO:0018026">
    <property type="term" value="P:peptidyl-lysine monomethylation"/>
    <property type="evidence" value="ECO:0000250"/>
    <property type="project" value="UniProtKB"/>
</dbReference>
<dbReference type="GO" id="GO:0043516">
    <property type="term" value="P:regulation of DNA damage response, signal transduction by p53 class mediator"/>
    <property type="evidence" value="ECO:0000250"/>
    <property type="project" value="UniProtKB"/>
</dbReference>
<dbReference type="CDD" id="cd19202">
    <property type="entry name" value="SET_SMYD2"/>
    <property type="match status" value="1"/>
</dbReference>
<dbReference type="FunFam" id="2.170.270.10:FF:000013">
    <property type="entry name" value="Histone-lysine N-methyltransferase SMYD1 isoform 1"/>
    <property type="match status" value="1"/>
</dbReference>
<dbReference type="FunFam" id="1.10.220.160:FF:000001">
    <property type="entry name" value="N-lysine methyltransferase SMYD2 isoform X1"/>
    <property type="match status" value="1"/>
</dbReference>
<dbReference type="FunFam" id="1.25.40.970:FF:000002">
    <property type="entry name" value="N-lysine methyltransferase SMYD2 isoform X1"/>
    <property type="match status" value="1"/>
</dbReference>
<dbReference type="FunFam" id="6.10.140.2220:FF:000013">
    <property type="entry name" value="N-lysine methyltransferase SMYD2 isoform X1"/>
    <property type="match status" value="1"/>
</dbReference>
<dbReference type="FunFam" id="1.25.40.10:FF:000249">
    <property type="entry name" value="N-lysine methyltransferase SMYD2 isoform X2"/>
    <property type="match status" value="1"/>
</dbReference>
<dbReference type="Gene3D" id="1.10.220.160">
    <property type="match status" value="1"/>
</dbReference>
<dbReference type="Gene3D" id="1.25.40.970">
    <property type="match status" value="1"/>
</dbReference>
<dbReference type="Gene3D" id="6.10.140.2220">
    <property type="match status" value="1"/>
</dbReference>
<dbReference type="Gene3D" id="2.170.270.10">
    <property type="entry name" value="SET domain"/>
    <property type="match status" value="1"/>
</dbReference>
<dbReference type="Gene3D" id="1.25.40.10">
    <property type="entry name" value="Tetratricopeptide repeat domain"/>
    <property type="match status" value="1"/>
</dbReference>
<dbReference type="InterPro" id="IPR050869">
    <property type="entry name" value="H3K4_H4K5_MeTrfase"/>
</dbReference>
<dbReference type="InterPro" id="IPR001214">
    <property type="entry name" value="SET_dom"/>
</dbReference>
<dbReference type="InterPro" id="IPR046341">
    <property type="entry name" value="SET_dom_sf"/>
</dbReference>
<dbReference type="InterPro" id="IPR044419">
    <property type="entry name" value="SMYD2_SET"/>
</dbReference>
<dbReference type="InterPro" id="IPR011990">
    <property type="entry name" value="TPR-like_helical_dom_sf"/>
</dbReference>
<dbReference type="InterPro" id="IPR002893">
    <property type="entry name" value="Znf_MYND"/>
</dbReference>
<dbReference type="PANTHER" id="PTHR12197">
    <property type="entry name" value="HISTONE-LYSINE N-METHYLTRANSFERASE SMYD"/>
    <property type="match status" value="1"/>
</dbReference>
<dbReference type="PANTHER" id="PTHR12197:SF193">
    <property type="entry name" value="N-LYSINE METHYLTRANSFERASE SMYD2"/>
    <property type="match status" value="1"/>
</dbReference>
<dbReference type="Pfam" id="PF00856">
    <property type="entry name" value="SET"/>
    <property type="match status" value="1"/>
</dbReference>
<dbReference type="Pfam" id="PF01753">
    <property type="entry name" value="zf-MYND"/>
    <property type="match status" value="1"/>
</dbReference>
<dbReference type="SMART" id="SM00317">
    <property type="entry name" value="SET"/>
    <property type="match status" value="1"/>
</dbReference>
<dbReference type="SUPFAM" id="SSF82199">
    <property type="entry name" value="SET domain"/>
    <property type="match status" value="1"/>
</dbReference>
<dbReference type="SUPFAM" id="SSF48452">
    <property type="entry name" value="TPR-like"/>
    <property type="match status" value="1"/>
</dbReference>
<dbReference type="PROSITE" id="PS50280">
    <property type="entry name" value="SET"/>
    <property type="match status" value="1"/>
</dbReference>
<dbReference type="PROSITE" id="PS01360">
    <property type="entry name" value="ZF_MYND_1"/>
    <property type="match status" value="1"/>
</dbReference>
<dbReference type="PROSITE" id="PS50865">
    <property type="entry name" value="ZF_MYND_2"/>
    <property type="match status" value="1"/>
</dbReference>
<comment type="function">
    <text evidence="2">Protein-lysine N-methyltransferase that methylates both histones and non-histone proteins, including p53/TP53 and RB1. Specifically trimethylates histone H3 'Lys-4' (H3K4me3) in vivo. The activity requires interaction with HSP90alpha. Shows even higher methyltransferase activity on p53/TP53. Monomethylates 'Lys-370' of p53/TP53, leading to decreased DNA-binding activity and subsequent transcriptional regulation activity of p53/TP53. Monomethylates RB1 at 'Lys-860'.</text>
</comment>
<comment type="catalytic activity">
    <reaction evidence="2">
        <text>L-lysyl(4)-[histone H3] + 3 S-adenosyl-L-methionine = N(6),N(6),N(6)-trimethyl-L-lysyl(4)-[histone H3] + 3 S-adenosyl-L-homocysteine + 3 H(+)</text>
        <dbReference type="Rhea" id="RHEA:60260"/>
        <dbReference type="Rhea" id="RHEA-COMP:15537"/>
        <dbReference type="Rhea" id="RHEA-COMP:15547"/>
        <dbReference type="ChEBI" id="CHEBI:15378"/>
        <dbReference type="ChEBI" id="CHEBI:29969"/>
        <dbReference type="ChEBI" id="CHEBI:57856"/>
        <dbReference type="ChEBI" id="CHEBI:59789"/>
        <dbReference type="ChEBI" id="CHEBI:61961"/>
        <dbReference type="EC" id="2.1.1.354"/>
    </reaction>
</comment>
<comment type="catalytic activity">
    <reaction evidence="2">
        <text>L-lysyl-[protein] + S-adenosyl-L-methionine = N(6)-methyl-L-lysyl-[protein] + S-adenosyl-L-homocysteine + H(+)</text>
        <dbReference type="Rhea" id="RHEA:51736"/>
        <dbReference type="Rhea" id="RHEA-COMP:9752"/>
        <dbReference type="Rhea" id="RHEA-COMP:13053"/>
        <dbReference type="ChEBI" id="CHEBI:15378"/>
        <dbReference type="ChEBI" id="CHEBI:29969"/>
        <dbReference type="ChEBI" id="CHEBI:57856"/>
        <dbReference type="ChEBI" id="CHEBI:59789"/>
        <dbReference type="ChEBI" id="CHEBI:61929"/>
    </reaction>
</comment>
<comment type="subcellular location">
    <subcellularLocation>
        <location evidence="1">Cytoplasm</location>
        <location evidence="1">Cytosol</location>
    </subcellularLocation>
    <subcellularLocation>
        <location evidence="1">Nucleus</location>
    </subcellularLocation>
</comment>
<comment type="similarity">
    <text evidence="4">Belongs to the class V-like SAM-binding methyltransferase superfamily.</text>
</comment>
<name>SMYD2_CHICK</name>
<accession>E1C5V0</accession>
<sequence length="436" mass="49947">MRSEAVPQPGGLERFASPGKGRGLRALRRYAVGELLFSCPAYTAVLTVSERGSHCDGCFARKEGLSKCGRCKQAFYCNVECQKEDWPMHKLECAAMCAFGQNWNPSETVRLTARILAKQKIHPERTQSEKLLAVKEFESHLDKLDNEKRELIQNDIAALHHFYSKHMEYPDNAALVVLFAQVNCNGFTIEDEELSHLGSAIFPDVALMNHSCCPNVIVTYKGTLAEVRAVKEIEPGEEVFTSYIDLLYPTEDRNDRLRDSYFFTCDCRECTMKEKDKEKLKIRKLNDPPSAEAVRDMIKYARNVIEEFRRAKHYKPPSELLEICELSLDKMGAVFEDSNVYMLHMMYQAMGVCLYVQDWEGALRYGQKIIRPYSKHYPSYSLNVASMWLKLGRLYMALENRPAGDKALKKAIAIMEVAHGKDHPYISEIKKELEDH</sequence>
<gene>
    <name type="primary">SMYD2</name>
</gene>
<keyword id="KW-0156">Chromatin regulator</keyword>
<keyword id="KW-0963">Cytoplasm</keyword>
<keyword id="KW-0479">Metal-binding</keyword>
<keyword id="KW-0489">Methyltransferase</keyword>
<keyword id="KW-0539">Nucleus</keyword>
<keyword id="KW-1185">Reference proteome</keyword>
<keyword id="KW-0949">S-adenosyl-L-methionine</keyword>
<keyword id="KW-0804">Transcription</keyword>
<keyword id="KW-0805">Transcription regulation</keyword>
<keyword id="KW-0808">Transferase</keyword>
<keyword id="KW-0862">Zinc</keyword>
<keyword id="KW-0863">Zinc-finger</keyword>
<protein>
    <recommendedName>
        <fullName>N-lysine methyltransferase SMYD2</fullName>
        <ecNumber evidence="2">2.1.1.-</ecNumber>
    </recommendedName>
    <alternativeName>
        <fullName>Histone methyltransferase SMYD2</fullName>
        <ecNumber evidence="2">2.1.1.354</ecNumber>
    </alternativeName>
    <alternativeName>
        <fullName>SET and MYND domain-containing protein 2</fullName>
    </alternativeName>
</protein>
<organism>
    <name type="scientific">Gallus gallus</name>
    <name type="common">Chicken</name>
    <dbReference type="NCBI Taxonomy" id="9031"/>
    <lineage>
        <taxon>Eukaryota</taxon>
        <taxon>Metazoa</taxon>
        <taxon>Chordata</taxon>
        <taxon>Craniata</taxon>
        <taxon>Vertebrata</taxon>
        <taxon>Euteleostomi</taxon>
        <taxon>Archelosauria</taxon>
        <taxon>Archosauria</taxon>
        <taxon>Dinosauria</taxon>
        <taxon>Saurischia</taxon>
        <taxon>Theropoda</taxon>
        <taxon>Coelurosauria</taxon>
        <taxon>Aves</taxon>
        <taxon>Neognathae</taxon>
        <taxon>Galloanserae</taxon>
        <taxon>Galliformes</taxon>
        <taxon>Phasianidae</taxon>
        <taxon>Phasianinae</taxon>
        <taxon>Gallus</taxon>
    </lineage>
</organism>
<reference key="1">
    <citation type="journal article" date="2004" name="Nature">
        <title>Sequence and comparative analysis of the chicken genome provide unique perspectives on vertebrate evolution.</title>
        <authorList>
            <person name="Hillier L.W."/>
            <person name="Miller W."/>
            <person name="Birney E."/>
            <person name="Warren W."/>
            <person name="Hardison R.C."/>
            <person name="Ponting C.P."/>
            <person name="Bork P."/>
            <person name="Burt D.W."/>
            <person name="Groenen M.A.M."/>
            <person name="Delany M.E."/>
            <person name="Dodgson J.B."/>
            <person name="Chinwalla A.T."/>
            <person name="Cliften P.F."/>
            <person name="Clifton S.W."/>
            <person name="Delehaunty K.D."/>
            <person name="Fronick C."/>
            <person name="Fulton R.S."/>
            <person name="Graves T.A."/>
            <person name="Kremitzki C."/>
            <person name="Layman D."/>
            <person name="Magrini V."/>
            <person name="McPherson J.D."/>
            <person name="Miner T.L."/>
            <person name="Minx P."/>
            <person name="Nash W.E."/>
            <person name="Nhan M.N."/>
            <person name="Nelson J.O."/>
            <person name="Oddy L.G."/>
            <person name="Pohl C.S."/>
            <person name="Randall-Maher J."/>
            <person name="Smith S.M."/>
            <person name="Wallis J.W."/>
            <person name="Yang S.-P."/>
            <person name="Romanov M.N."/>
            <person name="Rondelli C.M."/>
            <person name="Paton B."/>
            <person name="Smith J."/>
            <person name="Morrice D."/>
            <person name="Daniels L."/>
            <person name="Tempest H.G."/>
            <person name="Robertson L."/>
            <person name="Masabanda J.S."/>
            <person name="Griffin D.K."/>
            <person name="Vignal A."/>
            <person name="Fillon V."/>
            <person name="Jacobbson L."/>
            <person name="Kerje S."/>
            <person name="Andersson L."/>
            <person name="Crooijmans R.P."/>
            <person name="Aerts J."/>
            <person name="van der Poel J.J."/>
            <person name="Ellegren H."/>
            <person name="Caldwell R.B."/>
            <person name="Hubbard S.J."/>
            <person name="Grafham D.V."/>
            <person name="Kierzek A.M."/>
            <person name="McLaren S.R."/>
            <person name="Overton I.M."/>
            <person name="Arakawa H."/>
            <person name="Beattie K.J."/>
            <person name="Bezzubov Y."/>
            <person name="Boardman P.E."/>
            <person name="Bonfield J.K."/>
            <person name="Croning M.D.R."/>
            <person name="Davies R.M."/>
            <person name="Francis M.D."/>
            <person name="Humphray S.J."/>
            <person name="Scott C.E."/>
            <person name="Taylor R.G."/>
            <person name="Tickle C."/>
            <person name="Brown W.R.A."/>
            <person name="Rogers J."/>
            <person name="Buerstedde J.-M."/>
            <person name="Wilson S.A."/>
            <person name="Stubbs L."/>
            <person name="Ovcharenko I."/>
            <person name="Gordon L."/>
            <person name="Lucas S."/>
            <person name="Miller M.M."/>
            <person name="Inoko H."/>
            <person name="Shiina T."/>
            <person name="Kaufman J."/>
            <person name="Salomonsen J."/>
            <person name="Skjoedt K."/>
            <person name="Wong G.K.-S."/>
            <person name="Wang J."/>
            <person name="Liu B."/>
            <person name="Wang J."/>
            <person name="Yu J."/>
            <person name="Yang H."/>
            <person name="Nefedov M."/>
            <person name="Koriabine M."/>
            <person name="Dejong P.J."/>
            <person name="Goodstadt L."/>
            <person name="Webber C."/>
            <person name="Dickens N.J."/>
            <person name="Letunic I."/>
            <person name="Suyama M."/>
            <person name="Torrents D."/>
            <person name="von Mering C."/>
            <person name="Zdobnov E.M."/>
            <person name="Makova K."/>
            <person name="Nekrutenko A."/>
            <person name="Elnitski L."/>
            <person name="Eswara P."/>
            <person name="King D.C."/>
            <person name="Yang S.-P."/>
            <person name="Tyekucheva S."/>
            <person name="Radakrishnan A."/>
            <person name="Harris R.S."/>
            <person name="Chiaromonte F."/>
            <person name="Taylor J."/>
            <person name="He J."/>
            <person name="Rijnkels M."/>
            <person name="Griffiths-Jones S."/>
            <person name="Ureta-Vidal A."/>
            <person name="Hoffman M.M."/>
            <person name="Severin J."/>
            <person name="Searle S.M.J."/>
            <person name="Law A.S."/>
            <person name="Speed D."/>
            <person name="Waddington D."/>
            <person name="Cheng Z."/>
            <person name="Tuzun E."/>
            <person name="Eichler E."/>
            <person name="Bao Z."/>
            <person name="Flicek P."/>
            <person name="Shteynberg D.D."/>
            <person name="Brent M.R."/>
            <person name="Bye J.M."/>
            <person name="Huckle E.J."/>
            <person name="Chatterji S."/>
            <person name="Dewey C."/>
            <person name="Pachter L."/>
            <person name="Kouranov A."/>
            <person name="Mourelatos Z."/>
            <person name="Hatzigeorgiou A.G."/>
            <person name="Paterson A.H."/>
            <person name="Ivarie R."/>
            <person name="Brandstrom M."/>
            <person name="Axelsson E."/>
            <person name="Backstrom N."/>
            <person name="Berlin S."/>
            <person name="Webster M.T."/>
            <person name="Pourquie O."/>
            <person name="Reymond A."/>
            <person name="Ucla C."/>
            <person name="Antonarakis S.E."/>
            <person name="Long M."/>
            <person name="Emerson J.J."/>
            <person name="Betran E."/>
            <person name="Dupanloup I."/>
            <person name="Kaessmann H."/>
            <person name="Hinrichs A.S."/>
            <person name="Bejerano G."/>
            <person name="Furey T.S."/>
            <person name="Harte R.A."/>
            <person name="Raney B."/>
            <person name="Siepel A."/>
            <person name="Kent W.J."/>
            <person name="Haussler D."/>
            <person name="Eyras E."/>
            <person name="Castelo R."/>
            <person name="Abril J.F."/>
            <person name="Castellano S."/>
            <person name="Camara F."/>
            <person name="Parra G."/>
            <person name="Guigo R."/>
            <person name="Bourque G."/>
            <person name="Tesler G."/>
            <person name="Pevzner P.A."/>
            <person name="Smit A."/>
            <person name="Fulton L.A."/>
            <person name="Mardis E.R."/>
            <person name="Wilson R.K."/>
        </authorList>
    </citation>
    <scope>NUCLEOTIDE SEQUENCE [LARGE SCALE GENOMIC DNA]</scope>
</reference>